<dbReference type="EMBL" id="BX640437">
    <property type="protein sequence ID" value="CAE30530.1"/>
    <property type="molecule type" value="Genomic_DNA"/>
</dbReference>
<dbReference type="RefSeq" id="WP_003806903.1">
    <property type="nucleotide sequence ID" value="NC_002927.3"/>
</dbReference>
<dbReference type="SMR" id="Q7WRC6"/>
<dbReference type="GeneID" id="94357755"/>
<dbReference type="KEGG" id="bbr:BB0028"/>
<dbReference type="eggNOG" id="COG0051">
    <property type="taxonomic scope" value="Bacteria"/>
</dbReference>
<dbReference type="HOGENOM" id="CLU_122625_1_3_4"/>
<dbReference type="Proteomes" id="UP000001027">
    <property type="component" value="Chromosome"/>
</dbReference>
<dbReference type="GO" id="GO:1990904">
    <property type="term" value="C:ribonucleoprotein complex"/>
    <property type="evidence" value="ECO:0007669"/>
    <property type="project" value="UniProtKB-KW"/>
</dbReference>
<dbReference type="GO" id="GO:0005840">
    <property type="term" value="C:ribosome"/>
    <property type="evidence" value="ECO:0007669"/>
    <property type="project" value="UniProtKB-KW"/>
</dbReference>
<dbReference type="GO" id="GO:0003735">
    <property type="term" value="F:structural constituent of ribosome"/>
    <property type="evidence" value="ECO:0007669"/>
    <property type="project" value="InterPro"/>
</dbReference>
<dbReference type="GO" id="GO:0000049">
    <property type="term" value="F:tRNA binding"/>
    <property type="evidence" value="ECO:0007669"/>
    <property type="project" value="UniProtKB-UniRule"/>
</dbReference>
<dbReference type="GO" id="GO:0006412">
    <property type="term" value="P:translation"/>
    <property type="evidence" value="ECO:0007669"/>
    <property type="project" value="UniProtKB-UniRule"/>
</dbReference>
<dbReference type="FunFam" id="3.30.70.600:FF:000001">
    <property type="entry name" value="30S ribosomal protein S10"/>
    <property type="match status" value="1"/>
</dbReference>
<dbReference type="Gene3D" id="3.30.70.600">
    <property type="entry name" value="Ribosomal protein S10 domain"/>
    <property type="match status" value="1"/>
</dbReference>
<dbReference type="HAMAP" id="MF_00508">
    <property type="entry name" value="Ribosomal_uS10"/>
    <property type="match status" value="1"/>
</dbReference>
<dbReference type="InterPro" id="IPR001848">
    <property type="entry name" value="Ribosomal_uS10"/>
</dbReference>
<dbReference type="InterPro" id="IPR018268">
    <property type="entry name" value="Ribosomal_uS10_CS"/>
</dbReference>
<dbReference type="InterPro" id="IPR027486">
    <property type="entry name" value="Ribosomal_uS10_dom"/>
</dbReference>
<dbReference type="InterPro" id="IPR036838">
    <property type="entry name" value="Ribosomal_uS10_dom_sf"/>
</dbReference>
<dbReference type="NCBIfam" id="NF001861">
    <property type="entry name" value="PRK00596.1"/>
    <property type="match status" value="1"/>
</dbReference>
<dbReference type="NCBIfam" id="TIGR01049">
    <property type="entry name" value="rpsJ_bact"/>
    <property type="match status" value="1"/>
</dbReference>
<dbReference type="PANTHER" id="PTHR11700">
    <property type="entry name" value="30S RIBOSOMAL PROTEIN S10 FAMILY MEMBER"/>
    <property type="match status" value="1"/>
</dbReference>
<dbReference type="Pfam" id="PF00338">
    <property type="entry name" value="Ribosomal_S10"/>
    <property type="match status" value="1"/>
</dbReference>
<dbReference type="PRINTS" id="PR00971">
    <property type="entry name" value="RIBOSOMALS10"/>
</dbReference>
<dbReference type="SMART" id="SM01403">
    <property type="entry name" value="Ribosomal_S10"/>
    <property type="match status" value="1"/>
</dbReference>
<dbReference type="SUPFAM" id="SSF54999">
    <property type="entry name" value="Ribosomal protein S10"/>
    <property type="match status" value="1"/>
</dbReference>
<dbReference type="PROSITE" id="PS00361">
    <property type="entry name" value="RIBOSOMAL_S10"/>
    <property type="match status" value="1"/>
</dbReference>
<feature type="chain" id="PRO_0000146501" description="Small ribosomal subunit protein uS10">
    <location>
        <begin position="1"/>
        <end position="103"/>
    </location>
</feature>
<sequence length="103" mass="11807">MKNQKIRIRLKAFDYKLIDQSAAEIVDTAKRTGAVVRGPVPLPTRIRRYDVLRSPHVNKTSRDQFEIRTHQRLMDIVDPTDKTVDALMRLDLPAGVDVEIALQ</sequence>
<protein>
    <recommendedName>
        <fullName evidence="1">Small ribosomal subunit protein uS10</fullName>
    </recommendedName>
    <alternativeName>
        <fullName evidence="2">30S ribosomal protein S10</fullName>
    </alternativeName>
</protein>
<gene>
    <name evidence="1" type="primary">rpsJ</name>
    <name type="ordered locus">BB0028</name>
</gene>
<reference key="1">
    <citation type="journal article" date="2003" name="Nat. Genet.">
        <title>Comparative analysis of the genome sequences of Bordetella pertussis, Bordetella parapertussis and Bordetella bronchiseptica.</title>
        <authorList>
            <person name="Parkhill J."/>
            <person name="Sebaihia M."/>
            <person name="Preston A."/>
            <person name="Murphy L.D."/>
            <person name="Thomson N.R."/>
            <person name="Harris D.E."/>
            <person name="Holden M.T.G."/>
            <person name="Churcher C.M."/>
            <person name="Bentley S.D."/>
            <person name="Mungall K.L."/>
            <person name="Cerdeno-Tarraga A.-M."/>
            <person name="Temple L."/>
            <person name="James K.D."/>
            <person name="Harris B."/>
            <person name="Quail M.A."/>
            <person name="Achtman M."/>
            <person name="Atkin R."/>
            <person name="Baker S."/>
            <person name="Basham D."/>
            <person name="Bason N."/>
            <person name="Cherevach I."/>
            <person name="Chillingworth T."/>
            <person name="Collins M."/>
            <person name="Cronin A."/>
            <person name="Davis P."/>
            <person name="Doggett J."/>
            <person name="Feltwell T."/>
            <person name="Goble A."/>
            <person name="Hamlin N."/>
            <person name="Hauser H."/>
            <person name="Holroyd S."/>
            <person name="Jagels K."/>
            <person name="Leather S."/>
            <person name="Moule S."/>
            <person name="Norberczak H."/>
            <person name="O'Neil S."/>
            <person name="Ormond D."/>
            <person name="Price C."/>
            <person name="Rabbinowitsch E."/>
            <person name="Rutter S."/>
            <person name="Sanders M."/>
            <person name="Saunders D."/>
            <person name="Seeger K."/>
            <person name="Sharp S."/>
            <person name="Simmonds M."/>
            <person name="Skelton J."/>
            <person name="Squares R."/>
            <person name="Squares S."/>
            <person name="Stevens K."/>
            <person name="Unwin L."/>
            <person name="Whitehead S."/>
            <person name="Barrell B.G."/>
            <person name="Maskell D.J."/>
        </authorList>
    </citation>
    <scope>NUCLEOTIDE SEQUENCE [LARGE SCALE GENOMIC DNA]</scope>
    <source>
        <strain>ATCC BAA-588 / NCTC 13252 / RB50</strain>
    </source>
</reference>
<name>RS10_BORBR</name>
<keyword id="KW-0687">Ribonucleoprotein</keyword>
<keyword id="KW-0689">Ribosomal protein</keyword>
<evidence type="ECO:0000255" key="1">
    <source>
        <dbReference type="HAMAP-Rule" id="MF_00508"/>
    </source>
</evidence>
<evidence type="ECO:0000305" key="2"/>
<organism>
    <name type="scientific">Bordetella bronchiseptica (strain ATCC BAA-588 / NCTC 13252 / RB50)</name>
    <name type="common">Alcaligenes bronchisepticus</name>
    <dbReference type="NCBI Taxonomy" id="257310"/>
    <lineage>
        <taxon>Bacteria</taxon>
        <taxon>Pseudomonadati</taxon>
        <taxon>Pseudomonadota</taxon>
        <taxon>Betaproteobacteria</taxon>
        <taxon>Burkholderiales</taxon>
        <taxon>Alcaligenaceae</taxon>
        <taxon>Bordetella</taxon>
    </lineage>
</organism>
<proteinExistence type="inferred from homology"/>
<comment type="function">
    <text evidence="1">Involved in the binding of tRNA to the ribosomes.</text>
</comment>
<comment type="subunit">
    <text evidence="1">Part of the 30S ribosomal subunit.</text>
</comment>
<comment type="similarity">
    <text evidence="1">Belongs to the universal ribosomal protein uS10 family.</text>
</comment>
<accession>Q7WRC6</accession>